<dbReference type="EMBL" id="AJ250182">
    <property type="protein sequence ID" value="CAC12803.1"/>
    <property type="molecule type" value="Genomic_DNA"/>
</dbReference>
<dbReference type="SMR" id="Q9FT08"/>
<dbReference type="GO" id="GO:0009507">
    <property type="term" value="C:chloroplast"/>
    <property type="evidence" value="ECO:0007669"/>
    <property type="project" value="UniProtKB-SubCell"/>
</dbReference>
<dbReference type="GO" id="GO:0015935">
    <property type="term" value="C:small ribosomal subunit"/>
    <property type="evidence" value="ECO:0007669"/>
    <property type="project" value="InterPro"/>
</dbReference>
<dbReference type="GO" id="GO:0019843">
    <property type="term" value="F:rRNA binding"/>
    <property type="evidence" value="ECO:0007669"/>
    <property type="project" value="UniProtKB-UniRule"/>
</dbReference>
<dbReference type="GO" id="GO:0003735">
    <property type="term" value="F:structural constituent of ribosome"/>
    <property type="evidence" value="ECO:0007669"/>
    <property type="project" value="InterPro"/>
</dbReference>
<dbReference type="GO" id="GO:0042274">
    <property type="term" value="P:ribosomal small subunit biogenesis"/>
    <property type="evidence" value="ECO:0007669"/>
    <property type="project" value="TreeGrafter"/>
</dbReference>
<dbReference type="GO" id="GO:0006412">
    <property type="term" value="P:translation"/>
    <property type="evidence" value="ECO:0007669"/>
    <property type="project" value="UniProtKB-UniRule"/>
</dbReference>
<dbReference type="CDD" id="cd00165">
    <property type="entry name" value="S4"/>
    <property type="match status" value="1"/>
</dbReference>
<dbReference type="FunFam" id="1.10.1050.10:FF:000002">
    <property type="entry name" value="30S ribosomal protein S4, chloroplastic"/>
    <property type="match status" value="1"/>
</dbReference>
<dbReference type="FunFam" id="3.10.290.10:FF:000081">
    <property type="entry name" value="30S ribosomal protein S4, chloroplastic"/>
    <property type="match status" value="1"/>
</dbReference>
<dbReference type="Gene3D" id="1.10.1050.10">
    <property type="entry name" value="Ribosomal Protein S4 Delta 41, Chain A, domain 1"/>
    <property type="match status" value="1"/>
</dbReference>
<dbReference type="Gene3D" id="3.10.290.10">
    <property type="entry name" value="RNA-binding S4 domain"/>
    <property type="match status" value="1"/>
</dbReference>
<dbReference type="HAMAP" id="MF_01306_B">
    <property type="entry name" value="Ribosomal_uS4_B"/>
    <property type="match status" value="1"/>
</dbReference>
<dbReference type="InterPro" id="IPR022801">
    <property type="entry name" value="Ribosomal_uS4"/>
</dbReference>
<dbReference type="InterPro" id="IPR005709">
    <property type="entry name" value="Ribosomal_uS4_bac-type"/>
</dbReference>
<dbReference type="InterPro" id="IPR001912">
    <property type="entry name" value="Ribosomal_uS4_N"/>
</dbReference>
<dbReference type="InterPro" id="IPR002942">
    <property type="entry name" value="S4_RNA-bd"/>
</dbReference>
<dbReference type="InterPro" id="IPR036986">
    <property type="entry name" value="S4_RNA-bd_sf"/>
</dbReference>
<dbReference type="NCBIfam" id="NF003717">
    <property type="entry name" value="PRK05327.1"/>
    <property type="match status" value="1"/>
</dbReference>
<dbReference type="NCBIfam" id="TIGR01017">
    <property type="entry name" value="rpsD_bact"/>
    <property type="match status" value="1"/>
</dbReference>
<dbReference type="PANTHER" id="PTHR11831">
    <property type="entry name" value="30S 40S RIBOSOMAL PROTEIN"/>
    <property type="match status" value="1"/>
</dbReference>
<dbReference type="PANTHER" id="PTHR11831:SF4">
    <property type="entry name" value="SMALL RIBOSOMAL SUBUNIT PROTEIN US4M"/>
    <property type="match status" value="1"/>
</dbReference>
<dbReference type="Pfam" id="PF00163">
    <property type="entry name" value="Ribosomal_S4"/>
    <property type="match status" value="1"/>
</dbReference>
<dbReference type="Pfam" id="PF01479">
    <property type="entry name" value="S4"/>
    <property type="match status" value="1"/>
</dbReference>
<dbReference type="SMART" id="SM01390">
    <property type="entry name" value="Ribosomal_S4"/>
    <property type="match status" value="1"/>
</dbReference>
<dbReference type="SMART" id="SM00363">
    <property type="entry name" value="S4"/>
    <property type="match status" value="1"/>
</dbReference>
<dbReference type="SUPFAM" id="SSF55174">
    <property type="entry name" value="Alpha-L RNA-binding motif"/>
    <property type="match status" value="1"/>
</dbReference>
<dbReference type="PROSITE" id="PS50889">
    <property type="entry name" value="S4"/>
    <property type="match status" value="1"/>
</dbReference>
<gene>
    <name type="primary">rps4</name>
</gene>
<sequence length="202" mass="23296">MSRYRGPRVKIIRRLGALPGLTNKIPQLKSGYTNQSVSNKKISQYRIRLEEKQKLRFHYGITERQLLKYVRIARGAKGSTGQISLQSSEMRLDNIIFRLGIAPTIPGARQLVNHRHILVNNNIVNIPSYRCKPQDFITIKNSQKSQTIITKNIELSQKYQIPNHLTFNSLEKKGLVNQILDRESIGLKINELLVVEYYSRQA</sequence>
<reference key="1">
    <citation type="submission" date="1999-10" db="EMBL/GenBank/DDBJ databases">
        <title>A molecular approach to bryophyte systematics.</title>
        <authorList>
            <person name="Capesius I."/>
            <person name="Bloecher R."/>
        </authorList>
    </citation>
    <scope>NUCLEOTIDE SEQUENCE [GENOMIC DNA]</scope>
    <source>
        <tissue>Gametophyte</tissue>
    </source>
</reference>
<organism>
    <name type="scientific">Marchantia romanica</name>
    <name type="common">Liverwort</name>
    <name type="synonym">Bucegia romanica</name>
    <dbReference type="NCBI Taxonomy" id="3062406"/>
    <lineage>
        <taxon>Eukaryota</taxon>
        <taxon>Viridiplantae</taxon>
        <taxon>Streptophyta</taxon>
        <taxon>Embryophyta</taxon>
        <taxon>Marchantiophyta</taxon>
        <taxon>Marchantiopsida</taxon>
        <taxon>Marchantiidae</taxon>
        <taxon>Marchantiales</taxon>
        <taxon>Marchantiaceae</taxon>
        <taxon>Marchantia</taxon>
    </lineage>
</organism>
<keyword id="KW-0150">Chloroplast</keyword>
<keyword id="KW-0934">Plastid</keyword>
<keyword id="KW-0687">Ribonucleoprotein</keyword>
<keyword id="KW-0689">Ribosomal protein</keyword>
<keyword id="KW-0694">RNA-binding</keyword>
<keyword id="KW-0699">rRNA-binding</keyword>
<name>RR4_MARRM</name>
<comment type="function">
    <text evidence="1">One of the primary rRNA binding proteins, it binds directly to 16S rRNA where it nucleates assembly of the body of the 30S subunit.</text>
</comment>
<comment type="function">
    <text evidence="1">With S5 and S12 plays an important role in translational accuracy.</text>
</comment>
<comment type="subunit">
    <text evidence="1">Part of the 30S ribosomal subunit. Contacts protein S5. The interaction surface between S4 and S5 is involved in control of translational fidelity (By similarity).</text>
</comment>
<comment type="subcellular location">
    <subcellularLocation>
        <location>Plastid</location>
        <location>Chloroplast</location>
    </subcellularLocation>
</comment>
<comment type="similarity">
    <text evidence="2">Belongs to the universal ribosomal protein uS4 family.</text>
</comment>
<proteinExistence type="inferred from homology"/>
<evidence type="ECO:0000250" key="1"/>
<evidence type="ECO:0000305" key="2"/>
<feature type="chain" id="PRO_0000132549" description="Small ribosomal subunit protein uS4c">
    <location>
        <begin position="1"/>
        <end position="202"/>
    </location>
</feature>
<feature type="domain" description="S4 RNA-binding">
    <location>
        <begin position="90"/>
        <end position="158"/>
    </location>
</feature>
<protein>
    <recommendedName>
        <fullName evidence="2">Small ribosomal subunit protein uS4c</fullName>
    </recommendedName>
    <alternativeName>
        <fullName>30S ribosomal protein S4, chloroplastic</fullName>
    </alternativeName>
</protein>
<geneLocation type="chloroplast"/>
<accession>Q9FT08</accession>